<organism>
    <name type="scientific">Debaryomyces hansenii (strain ATCC 36239 / CBS 767 / BCRC 21394 / JCM 1990 / NBRC 0083 / IGC 2968)</name>
    <name type="common">Yeast</name>
    <name type="synonym">Torulaspora hansenii</name>
    <dbReference type="NCBI Taxonomy" id="284592"/>
    <lineage>
        <taxon>Eukaryota</taxon>
        <taxon>Fungi</taxon>
        <taxon>Dikarya</taxon>
        <taxon>Ascomycota</taxon>
        <taxon>Saccharomycotina</taxon>
        <taxon>Pichiomycetes</taxon>
        <taxon>Debaryomycetaceae</taxon>
        <taxon>Debaryomyces</taxon>
    </lineage>
</organism>
<feature type="chain" id="PRO_0000058211" description="pH-response regulator protein palI/RIM9">
    <location>
        <begin position="1"/>
        <end position="365"/>
    </location>
</feature>
<feature type="topological domain" description="Cytoplasmic" evidence="2">
    <location>
        <begin position="1"/>
        <end position="3"/>
    </location>
</feature>
<feature type="transmembrane region" description="Helical" evidence="2">
    <location>
        <begin position="4"/>
        <end position="24"/>
    </location>
</feature>
<feature type="topological domain" description="Extracellular" evidence="2">
    <location>
        <begin position="25"/>
        <end position="107"/>
    </location>
</feature>
<feature type="transmembrane region" description="Helical" evidence="2">
    <location>
        <begin position="108"/>
        <end position="128"/>
    </location>
</feature>
<feature type="topological domain" description="Cytoplasmic" evidence="2">
    <location>
        <begin position="129"/>
        <end position="197"/>
    </location>
</feature>
<feature type="transmembrane region" description="Helical" evidence="2">
    <location>
        <begin position="198"/>
        <end position="218"/>
    </location>
</feature>
<feature type="topological domain" description="Extracellular" evidence="2">
    <location>
        <begin position="219"/>
        <end position="224"/>
    </location>
</feature>
<feature type="transmembrane region" description="Helical" evidence="2">
    <location>
        <begin position="225"/>
        <end position="245"/>
    </location>
</feature>
<feature type="topological domain" description="Cytoplasmic" evidence="2">
    <location>
        <begin position="246"/>
        <end position="365"/>
    </location>
</feature>
<feature type="region of interest" description="Disordered" evidence="3">
    <location>
        <begin position="154"/>
        <end position="181"/>
    </location>
</feature>
<feature type="region of interest" description="Disordered" evidence="3">
    <location>
        <begin position="327"/>
        <end position="346"/>
    </location>
</feature>
<feature type="compositionally biased region" description="Low complexity" evidence="3">
    <location>
        <begin position="154"/>
        <end position="166"/>
    </location>
</feature>
<dbReference type="EMBL" id="CR382137">
    <property type="protein sequence ID" value="CAG88501.2"/>
    <property type="molecule type" value="Genomic_DNA"/>
</dbReference>
<dbReference type="RefSeq" id="XP_460228.2">
    <property type="nucleotide sequence ID" value="XM_460228.1"/>
</dbReference>
<dbReference type="SMR" id="Q6BNJ2"/>
<dbReference type="FunCoup" id="Q6BNJ2">
    <property type="interactions" value="7"/>
</dbReference>
<dbReference type="STRING" id="284592.Q6BNJ2"/>
<dbReference type="GeneID" id="2902881"/>
<dbReference type="KEGG" id="dha:DEHA2E21252g"/>
<dbReference type="VEuPathDB" id="FungiDB:DEHA2E21252g"/>
<dbReference type="eggNOG" id="ENOG502S1J0">
    <property type="taxonomic scope" value="Eukaryota"/>
</dbReference>
<dbReference type="HOGENOM" id="CLU_828994_0_0_1"/>
<dbReference type="InParanoid" id="Q6BNJ2"/>
<dbReference type="OMA" id="HVVAFCF"/>
<dbReference type="OrthoDB" id="2354757at2759"/>
<dbReference type="Proteomes" id="UP000000599">
    <property type="component" value="Chromosome E"/>
</dbReference>
<dbReference type="GO" id="GO:0032153">
    <property type="term" value="C:cell division site"/>
    <property type="evidence" value="ECO:0007669"/>
    <property type="project" value="TreeGrafter"/>
</dbReference>
<dbReference type="GO" id="GO:0035838">
    <property type="term" value="C:growing cell tip"/>
    <property type="evidence" value="ECO:0007669"/>
    <property type="project" value="TreeGrafter"/>
</dbReference>
<dbReference type="GO" id="GO:0005886">
    <property type="term" value="C:plasma membrane"/>
    <property type="evidence" value="ECO:0007669"/>
    <property type="project" value="UniProtKB-SubCell"/>
</dbReference>
<dbReference type="InterPro" id="IPR051380">
    <property type="entry name" value="pH-response_reg_palI/RIM9"/>
</dbReference>
<dbReference type="InterPro" id="IPR009571">
    <property type="entry name" value="SUR7/Rim9-like_fungi"/>
</dbReference>
<dbReference type="PANTHER" id="PTHR28013">
    <property type="entry name" value="PROTEIN DCV1-RELATED"/>
    <property type="match status" value="1"/>
</dbReference>
<dbReference type="PANTHER" id="PTHR28013:SF3">
    <property type="entry name" value="PROTEIN DCV1-RELATED"/>
    <property type="match status" value="1"/>
</dbReference>
<dbReference type="Pfam" id="PF06687">
    <property type="entry name" value="SUR7"/>
    <property type="match status" value="1"/>
</dbReference>
<comment type="function">
    <text evidence="1">Required for the proteolytic cleavage of the transcription factor RIM101 in response to alkaline ambient pH.</text>
</comment>
<comment type="subcellular location">
    <subcellularLocation>
        <location evidence="1">Cell membrane</location>
        <topology evidence="1">Multi-pass membrane protein</topology>
    </subcellularLocation>
</comment>
<comment type="similarity">
    <text evidence="4">Belongs to the palI/RIM9 family.</text>
</comment>
<accession>Q6BNJ2</accession>
<evidence type="ECO:0000250" key="1"/>
<evidence type="ECO:0000255" key="2"/>
<evidence type="ECO:0000256" key="3">
    <source>
        <dbReference type="SAM" id="MobiDB-lite"/>
    </source>
</evidence>
<evidence type="ECO:0000305" key="4"/>
<sequence>MHKGLLILDLFVSICLTIQLLPIISVPITGKGIGYNLHLSKYGNYTFGVLGLCTSNNICSKPKVGYPPETDAFYSFMDDENGEYPDFAAAELPSRARYVISKLLVVHIVGFCFTTLLFLLSLALTVILWLEESETKVPFKDAVRKKVKIRQNSRNNSSTELTESTSATKMNSLSDEGTVDNERKSKDITPYLNFMLMLSLLSFLSTLLAFLSDILLFIPHLSYLGWLQLCPIILLSTVTSMLCFIKRSISSRKYLNDEYRYENDDMRKSVNVGVLNWKDTDSDDGFYVYTNGFYSNYNNDDTPQEGHSHAPELFPANISTHSGWIRHSGHNETGDDVSISSSRDDSYNEHENIQMRLLNDHEHIT</sequence>
<gene>
    <name type="primary">RIM9</name>
    <name type="ordered locus">DEHA2E21252g</name>
</gene>
<reference key="1">
    <citation type="journal article" date="2004" name="Nature">
        <title>Genome evolution in yeasts.</title>
        <authorList>
            <person name="Dujon B."/>
            <person name="Sherman D."/>
            <person name="Fischer G."/>
            <person name="Durrens P."/>
            <person name="Casaregola S."/>
            <person name="Lafontaine I."/>
            <person name="de Montigny J."/>
            <person name="Marck C."/>
            <person name="Neuveglise C."/>
            <person name="Talla E."/>
            <person name="Goffard N."/>
            <person name="Frangeul L."/>
            <person name="Aigle M."/>
            <person name="Anthouard V."/>
            <person name="Babour A."/>
            <person name="Barbe V."/>
            <person name="Barnay S."/>
            <person name="Blanchin S."/>
            <person name="Beckerich J.-M."/>
            <person name="Beyne E."/>
            <person name="Bleykasten C."/>
            <person name="Boisrame A."/>
            <person name="Boyer J."/>
            <person name="Cattolico L."/>
            <person name="Confanioleri F."/>
            <person name="de Daruvar A."/>
            <person name="Despons L."/>
            <person name="Fabre E."/>
            <person name="Fairhead C."/>
            <person name="Ferry-Dumazet H."/>
            <person name="Groppi A."/>
            <person name="Hantraye F."/>
            <person name="Hennequin C."/>
            <person name="Jauniaux N."/>
            <person name="Joyet P."/>
            <person name="Kachouri R."/>
            <person name="Kerrest A."/>
            <person name="Koszul R."/>
            <person name="Lemaire M."/>
            <person name="Lesur I."/>
            <person name="Ma L."/>
            <person name="Muller H."/>
            <person name="Nicaud J.-M."/>
            <person name="Nikolski M."/>
            <person name="Oztas S."/>
            <person name="Ozier-Kalogeropoulos O."/>
            <person name="Pellenz S."/>
            <person name="Potier S."/>
            <person name="Richard G.-F."/>
            <person name="Straub M.-L."/>
            <person name="Suleau A."/>
            <person name="Swennen D."/>
            <person name="Tekaia F."/>
            <person name="Wesolowski-Louvel M."/>
            <person name="Westhof E."/>
            <person name="Wirth B."/>
            <person name="Zeniou-Meyer M."/>
            <person name="Zivanovic Y."/>
            <person name="Bolotin-Fukuhara M."/>
            <person name="Thierry A."/>
            <person name="Bouchier C."/>
            <person name="Caudron B."/>
            <person name="Scarpelli C."/>
            <person name="Gaillardin C."/>
            <person name="Weissenbach J."/>
            <person name="Wincker P."/>
            <person name="Souciet J.-L."/>
        </authorList>
    </citation>
    <scope>NUCLEOTIDE SEQUENCE [LARGE SCALE GENOMIC DNA]</scope>
    <source>
        <strain>ATCC 36239 / CBS 767 / BCRC 21394 / JCM 1990 / NBRC 0083 / IGC 2968</strain>
    </source>
</reference>
<proteinExistence type="inferred from homology"/>
<keyword id="KW-1003">Cell membrane</keyword>
<keyword id="KW-0472">Membrane</keyword>
<keyword id="KW-1185">Reference proteome</keyword>
<keyword id="KW-0812">Transmembrane</keyword>
<keyword id="KW-1133">Transmembrane helix</keyword>
<name>PALI_DEBHA</name>
<protein>
    <recommendedName>
        <fullName>pH-response regulator protein palI/RIM9</fullName>
    </recommendedName>
</protein>